<accession>Q55G34</accession>
<evidence type="ECO:0000256" key="1">
    <source>
        <dbReference type="SAM" id="MobiDB-lite"/>
    </source>
</evidence>
<feature type="chain" id="PRO_0000348201" description="Putative uncharacterized protein DDB_G0267840">
    <location>
        <begin position="1"/>
        <end position="1432"/>
    </location>
</feature>
<feature type="region of interest" description="Disordered" evidence="1">
    <location>
        <begin position="1"/>
        <end position="72"/>
    </location>
</feature>
<feature type="region of interest" description="Disordered" evidence="1">
    <location>
        <begin position="208"/>
        <end position="237"/>
    </location>
</feature>
<feature type="region of interest" description="Disordered" evidence="1">
    <location>
        <begin position="280"/>
        <end position="335"/>
    </location>
</feature>
<feature type="region of interest" description="Disordered" evidence="1">
    <location>
        <begin position="531"/>
        <end position="607"/>
    </location>
</feature>
<feature type="region of interest" description="Disordered" evidence="1">
    <location>
        <begin position="690"/>
        <end position="712"/>
    </location>
</feature>
<feature type="region of interest" description="Disordered" evidence="1">
    <location>
        <begin position="738"/>
        <end position="801"/>
    </location>
</feature>
<feature type="region of interest" description="Disordered" evidence="1">
    <location>
        <begin position="896"/>
        <end position="950"/>
    </location>
</feature>
<feature type="region of interest" description="Disordered" evidence="1">
    <location>
        <begin position="1044"/>
        <end position="1076"/>
    </location>
</feature>
<feature type="region of interest" description="Disordered" evidence="1">
    <location>
        <begin position="1303"/>
        <end position="1359"/>
    </location>
</feature>
<feature type="compositionally biased region" description="Low complexity" evidence="1">
    <location>
        <begin position="14"/>
        <end position="72"/>
    </location>
</feature>
<feature type="compositionally biased region" description="Low complexity" evidence="1">
    <location>
        <begin position="208"/>
        <end position="225"/>
    </location>
</feature>
<feature type="compositionally biased region" description="Low complexity" evidence="1">
    <location>
        <begin position="284"/>
        <end position="300"/>
    </location>
</feature>
<feature type="compositionally biased region" description="Acidic residues" evidence="1">
    <location>
        <begin position="315"/>
        <end position="325"/>
    </location>
</feature>
<feature type="compositionally biased region" description="Low complexity" evidence="1">
    <location>
        <begin position="536"/>
        <end position="575"/>
    </location>
</feature>
<feature type="compositionally biased region" description="Low complexity" evidence="1">
    <location>
        <begin position="583"/>
        <end position="607"/>
    </location>
</feature>
<feature type="compositionally biased region" description="Low complexity" evidence="1">
    <location>
        <begin position="691"/>
        <end position="712"/>
    </location>
</feature>
<feature type="compositionally biased region" description="Low complexity" evidence="1">
    <location>
        <begin position="744"/>
        <end position="779"/>
    </location>
</feature>
<feature type="compositionally biased region" description="Low complexity" evidence="1">
    <location>
        <begin position="896"/>
        <end position="944"/>
    </location>
</feature>
<feature type="compositionally biased region" description="Gly residues" evidence="1">
    <location>
        <begin position="1311"/>
        <end position="1320"/>
    </location>
</feature>
<feature type="compositionally biased region" description="Low complexity" evidence="1">
    <location>
        <begin position="1321"/>
        <end position="1333"/>
    </location>
</feature>
<feature type="compositionally biased region" description="Gly residues" evidence="1">
    <location>
        <begin position="1334"/>
        <end position="1346"/>
    </location>
</feature>
<feature type="compositionally biased region" description="Low complexity" evidence="1">
    <location>
        <begin position="1347"/>
        <end position="1359"/>
    </location>
</feature>
<sequence length="1432" mass="160089">MDTIGLDETTTIEINNNSNNKHSSYSSSSSNNNSNNLIISKIPNKIIDSNNNKNNNNNKNNNNNNNKNNYYNINKSSKMDMDYLLDCVQKTHGLIKDLTDSMLISNDQEERKQFQKQLNESNNYLNELLSKLSYIKNNNNINNNNNNGNINSNNGTSFGEIKSIPLMSNETGFTNNKITNNFNYSENKNNNNNNNNGQEQHELFSTSNKIENNNNNNNNKINNENNNEKNKNNNNGQHIIPKIYISDHEMAPNSEFQNIDSISPSSQLICGESRLTPVSERNELTSPASSLPSLPSLPSSMPKENKENKEPINQQEEEEEEEEEDEQKKEEENNLVKMTTVQVENTQEKIPLAKSATISTTNKTIEIEEQEKGMDSEKLKKTIKSSSSSSSNLFNDFPKPFIPFVQSNYNTEERNEVLQIVKLIHYEYGVQIKDKTGQLDNYMYNINFNPPPQYMCNSNDINSNNINSNINNNNNNMSNNLKKKLLIISNEKRNKMGPQIQRSPEETYLSNHFDEEELSNYFSHSFMSPKIVKSPSSSNLNKINQNNQNNNNNNIINNNNNNNNQNNTTTNNKNKSNNEKNNDNNTVFNNNTTTTNNNNNNNNNNSSEKNKVIVFEKKEPGQFIFKKEKVAKLSTSLSYSNLSSSSSNGGTAEDEEYDRYYDSFHCVELVDEDLLVYDNEDIYFNDEVDQNKSPLISPSLSKSNTTTTTTTTTTTTTATYANVNANAIATIGSSRKINNTLSPNMNNNNNNNNNNNNNNNNNNNNNNNNNNNNNNNSNNTSPTLTTQENNGISNGSGNGGRKIHYRSLSHGIIKTPFTNNKLKTLQIFVPTEPYTCRLEITIEENVTVERLLIEVIDLCIKERRKIQYHKRQKLQIQQLQLLQQPIITTTTTVAVQSNNNNNSSNNNNNNNNNNNNNMTSPINQSQSLTSSTTSSNISSSSSSNAFSPPTVSVSNQLISNNKNGNDFESLTFPFLIYTNHRDFILKKSDENGEIDQTLQPIIRTTEIKKLKTDCFSLVINPKAIRDTTHHPQIFRVHIIHSSNNINSNSNNNNNNNNNNNNNNNNNNNNYNNNNNNNCNNGIVKSISFSNIGEVDQSSSSIAPSSSTTAATAATSSTTKDSVAVVYKSSSTLASIKASICKKENLELNLCVFMTMSNEVIQNEKITLVELNLPSVKLVYDQIKPIQKSITPFQSEGVVGNAPRPITKLLGPIFFFTPDNICEIKQYVVSKIGKLGVKKDRYMEISKDKIMYSQFDYLPSSSVSQNGFHNNNNNNNKEYYGGGVGGGGGFTNYNNFSNANLNNNNNNSNFGNGNGNGGINGNNGNNSGSNNKENGGTGAGIGGGGGLQLPNNNNNNNTTPLKNNKFFRSFSSAVIKTPYQLINDISGVGIIINKPNSFYLKCNNKNSEYSSTDADEIVAKIQFIIRLKKENLI</sequence>
<dbReference type="EMBL" id="AAFI02000003">
    <property type="protein sequence ID" value="EAL73373.1"/>
    <property type="molecule type" value="Genomic_DNA"/>
</dbReference>
<dbReference type="RefSeq" id="XP_647349.1">
    <property type="nucleotide sequence ID" value="XM_642257.1"/>
</dbReference>
<dbReference type="SMR" id="Q55G34"/>
<dbReference type="FunCoup" id="Q55G34">
    <property type="interactions" value="877"/>
</dbReference>
<dbReference type="STRING" id="44689.Q55G34"/>
<dbReference type="PaxDb" id="44689-DDB0189585"/>
<dbReference type="EnsemblProtists" id="EAL73373">
    <property type="protein sequence ID" value="EAL73373"/>
    <property type="gene ID" value="DDB_G0267840"/>
</dbReference>
<dbReference type="GeneID" id="8616160"/>
<dbReference type="KEGG" id="ddi:DDB_G0267840"/>
<dbReference type="dictyBase" id="DDB_G0267840"/>
<dbReference type="VEuPathDB" id="AmoebaDB:DDB_G0267840"/>
<dbReference type="eggNOG" id="ENOG502RCP1">
    <property type="taxonomic scope" value="Eukaryota"/>
</dbReference>
<dbReference type="HOGENOM" id="CLU_252394_0_0_1"/>
<dbReference type="InParanoid" id="Q55G34"/>
<dbReference type="OMA" id="KDRYMEI"/>
<dbReference type="PRO" id="PR:Q55G34"/>
<dbReference type="Proteomes" id="UP000002195">
    <property type="component" value="Chromosome 1"/>
</dbReference>
<dbReference type="InterPro" id="IPR053097">
    <property type="entry name" value="Prespore_vesicle_assoc"/>
</dbReference>
<dbReference type="PANTHER" id="PTHR34586:SF8">
    <property type="entry name" value="NUCLEASE-RELATED"/>
    <property type="match status" value="1"/>
</dbReference>
<dbReference type="PANTHER" id="PTHR34586">
    <property type="entry name" value="SPERACT/SCAVENGER RECEPTOR DOMAIN-CONTAINING PROTEIN"/>
    <property type="match status" value="1"/>
</dbReference>
<organism>
    <name type="scientific">Dictyostelium discoideum</name>
    <name type="common">Social amoeba</name>
    <dbReference type="NCBI Taxonomy" id="44689"/>
    <lineage>
        <taxon>Eukaryota</taxon>
        <taxon>Amoebozoa</taxon>
        <taxon>Evosea</taxon>
        <taxon>Eumycetozoa</taxon>
        <taxon>Dictyostelia</taxon>
        <taxon>Dictyosteliales</taxon>
        <taxon>Dictyosteliaceae</taxon>
        <taxon>Dictyostelium</taxon>
    </lineage>
</organism>
<proteinExistence type="predicted"/>
<keyword id="KW-1185">Reference proteome</keyword>
<gene>
    <name type="ORF">DDB_G0267840</name>
</gene>
<name>Y9585_DICDI</name>
<reference key="1">
    <citation type="journal article" date="2005" name="Nature">
        <title>The genome of the social amoeba Dictyostelium discoideum.</title>
        <authorList>
            <person name="Eichinger L."/>
            <person name="Pachebat J.A."/>
            <person name="Gloeckner G."/>
            <person name="Rajandream M.A."/>
            <person name="Sucgang R."/>
            <person name="Berriman M."/>
            <person name="Song J."/>
            <person name="Olsen R."/>
            <person name="Szafranski K."/>
            <person name="Xu Q."/>
            <person name="Tunggal B."/>
            <person name="Kummerfeld S."/>
            <person name="Madera M."/>
            <person name="Konfortov B.A."/>
            <person name="Rivero F."/>
            <person name="Bankier A.T."/>
            <person name="Lehmann R."/>
            <person name="Hamlin N."/>
            <person name="Davies R."/>
            <person name="Gaudet P."/>
            <person name="Fey P."/>
            <person name="Pilcher K."/>
            <person name="Chen G."/>
            <person name="Saunders D."/>
            <person name="Sodergren E.J."/>
            <person name="Davis P."/>
            <person name="Kerhornou A."/>
            <person name="Nie X."/>
            <person name="Hall N."/>
            <person name="Anjard C."/>
            <person name="Hemphill L."/>
            <person name="Bason N."/>
            <person name="Farbrother P."/>
            <person name="Desany B."/>
            <person name="Just E."/>
            <person name="Morio T."/>
            <person name="Rost R."/>
            <person name="Churcher C.M."/>
            <person name="Cooper J."/>
            <person name="Haydock S."/>
            <person name="van Driessche N."/>
            <person name="Cronin A."/>
            <person name="Goodhead I."/>
            <person name="Muzny D.M."/>
            <person name="Mourier T."/>
            <person name="Pain A."/>
            <person name="Lu M."/>
            <person name="Harper D."/>
            <person name="Lindsay R."/>
            <person name="Hauser H."/>
            <person name="James K.D."/>
            <person name="Quiles M."/>
            <person name="Madan Babu M."/>
            <person name="Saito T."/>
            <person name="Buchrieser C."/>
            <person name="Wardroper A."/>
            <person name="Felder M."/>
            <person name="Thangavelu M."/>
            <person name="Johnson D."/>
            <person name="Knights A."/>
            <person name="Loulseged H."/>
            <person name="Mungall K.L."/>
            <person name="Oliver K."/>
            <person name="Price C."/>
            <person name="Quail M.A."/>
            <person name="Urushihara H."/>
            <person name="Hernandez J."/>
            <person name="Rabbinowitsch E."/>
            <person name="Steffen D."/>
            <person name="Sanders M."/>
            <person name="Ma J."/>
            <person name="Kohara Y."/>
            <person name="Sharp S."/>
            <person name="Simmonds M.N."/>
            <person name="Spiegler S."/>
            <person name="Tivey A."/>
            <person name="Sugano S."/>
            <person name="White B."/>
            <person name="Walker D."/>
            <person name="Woodward J.R."/>
            <person name="Winckler T."/>
            <person name="Tanaka Y."/>
            <person name="Shaulsky G."/>
            <person name="Schleicher M."/>
            <person name="Weinstock G.M."/>
            <person name="Rosenthal A."/>
            <person name="Cox E.C."/>
            <person name="Chisholm R.L."/>
            <person name="Gibbs R.A."/>
            <person name="Loomis W.F."/>
            <person name="Platzer M."/>
            <person name="Kay R.R."/>
            <person name="Williams J.G."/>
            <person name="Dear P.H."/>
            <person name="Noegel A.A."/>
            <person name="Barrell B.G."/>
            <person name="Kuspa A."/>
        </authorList>
    </citation>
    <scope>NUCLEOTIDE SEQUENCE [LARGE SCALE GENOMIC DNA]</scope>
    <source>
        <strain>AX4</strain>
    </source>
</reference>
<protein>
    <recommendedName>
        <fullName>Putative uncharacterized protein DDB_G0267840</fullName>
    </recommendedName>
</protein>